<keyword id="KW-0997">Cell inner membrane</keyword>
<keyword id="KW-1003">Cell membrane</keyword>
<keyword id="KW-0406">Ion transport</keyword>
<keyword id="KW-0472">Membrane</keyword>
<keyword id="KW-0520">NAD</keyword>
<keyword id="KW-1185">Reference proteome</keyword>
<keyword id="KW-0915">Sodium</keyword>
<keyword id="KW-0739">Sodium transport</keyword>
<keyword id="KW-1278">Translocase</keyword>
<keyword id="KW-0812">Transmembrane</keyword>
<keyword id="KW-1133">Transmembrane helix</keyword>
<keyword id="KW-0813">Transport</keyword>
<keyword id="KW-0830">Ubiquinone</keyword>
<sequence>MTTNKSYLTYFTDALWINNQPLIAILGICSALAVTTTVTTALTMGFAVSFVTGCSSFVVSLLRKITPESVRMIAQLIIISLFVILIDQFLKAFFFTISKTLSVFVGLIITNCIVMGRAESMARHVSPIPAFLDGLGSGLGYGWVLVCISIIRELFGFGTILGFRVIPEILYTSAAHPDGYENLGLMVLAPSAFFLLGIMIWIVNIIRAPKTKR</sequence>
<comment type="function">
    <text evidence="1">NQR complex catalyzes the reduction of ubiquinone-1 to ubiquinol by two successive reactions, coupled with the transport of Na(+) ions from the cytoplasm to the periplasm. NqrA to NqrE are probably involved in the second step, the conversion of ubisemiquinone to ubiquinol.</text>
</comment>
<comment type="catalytic activity">
    <reaction evidence="1">
        <text>a ubiquinone + n Na(+)(in) + NADH + H(+) = a ubiquinol + n Na(+)(out) + NAD(+)</text>
        <dbReference type="Rhea" id="RHEA:47748"/>
        <dbReference type="Rhea" id="RHEA-COMP:9565"/>
        <dbReference type="Rhea" id="RHEA-COMP:9566"/>
        <dbReference type="ChEBI" id="CHEBI:15378"/>
        <dbReference type="ChEBI" id="CHEBI:16389"/>
        <dbReference type="ChEBI" id="CHEBI:17976"/>
        <dbReference type="ChEBI" id="CHEBI:29101"/>
        <dbReference type="ChEBI" id="CHEBI:57540"/>
        <dbReference type="ChEBI" id="CHEBI:57945"/>
        <dbReference type="EC" id="7.2.1.1"/>
    </reaction>
</comment>
<comment type="subunit">
    <text evidence="1">Composed of six subunits; NqrA, NqrB, NqrC, NqrD, NqrE and NqrF.</text>
</comment>
<comment type="subcellular location">
    <subcellularLocation>
        <location evidence="1">Cell inner membrane</location>
        <topology evidence="1">Multi-pass membrane protein</topology>
    </subcellularLocation>
</comment>
<comment type="similarity">
    <text evidence="1">Belongs to the NqrDE/RnfAE family.</text>
</comment>
<reference key="1">
    <citation type="journal article" date="1998" name="Science">
        <title>Genome sequence of an obligate intracellular pathogen of humans: Chlamydia trachomatis.</title>
        <authorList>
            <person name="Stephens R.S."/>
            <person name="Kalman S."/>
            <person name="Lammel C.J."/>
            <person name="Fan J."/>
            <person name="Marathe R."/>
            <person name="Aravind L."/>
            <person name="Mitchell W.P."/>
            <person name="Olinger L."/>
            <person name="Tatusov R.L."/>
            <person name="Zhao Q."/>
            <person name="Koonin E.V."/>
            <person name="Davis R.W."/>
        </authorList>
    </citation>
    <scope>NUCLEOTIDE SEQUENCE [LARGE SCALE GENOMIC DNA]</scope>
    <source>
        <strain>ATCC VR-885 / DSM 19411 / UW-3/Cx</strain>
    </source>
</reference>
<protein>
    <recommendedName>
        <fullName evidence="1">Na(+)-translocating NADH-quinone reductase subunit D</fullName>
        <shortName evidence="1">Na(+)-NQR subunit D</shortName>
        <shortName evidence="1">Na(+)-translocating NQR subunit D</shortName>
        <ecNumber evidence="1">7.2.1.1</ecNumber>
    </recommendedName>
    <alternativeName>
        <fullName evidence="1">NQR complex subunit D</fullName>
    </alternativeName>
    <alternativeName>
        <fullName evidence="1">NQR-1 subunit D</fullName>
    </alternativeName>
</protein>
<accession>O84282</accession>
<gene>
    <name evidence="1" type="primary">nqrD</name>
    <name type="synonym">nqr4</name>
    <name type="ordered locus">CT_280</name>
</gene>
<dbReference type="EC" id="7.2.1.1" evidence="1"/>
<dbReference type="EMBL" id="AE001273">
    <property type="protein sequence ID" value="AAC67873.1"/>
    <property type="molecule type" value="Genomic_DNA"/>
</dbReference>
<dbReference type="PIR" id="E71535">
    <property type="entry name" value="E71535"/>
</dbReference>
<dbReference type="RefSeq" id="NP_219785.1">
    <property type="nucleotide sequence ID" value="NC_000117.1"/>
</dbReference>
<dbReference type="RefSeq" id="WP_009872522.1">
    <property type="nucleotide sequence ID" value="NC_000117.1"/>
</dbReference>
<dbReference type="SMR" id="O84282"/>
<dbReference type="STRING" id="272561.CT_280"/>
<dbReference type="EnsemblBacteria" id="AAC67873">
    <property type="protein sequence ID" value="AAC67873"/>
    <property type="gene ID" value="CT_280"/>
</dbReference>
<dbReference type="GeneID" id="884843"/>
<dbReference type="KEGG" id="ctr:CT_280"/>
<dbReference type="PATRIC" id="fig|272561.5.peg.299"/>
<dbReference type="HOGENOM" id="CLU_046659_1_1_0"/>
<dbReference type="InParanoid" id="O84282"/>
<dbReference type="OrthoDB" id="9790976at2"/>
<dbReference type="Proteomes" id="UP000000431">
    <property type="component" value="Chromosome"/>
</dbReference>
<dbReference type="GO" id="GO:0005886">
    <property type="term" value="C:plasma membrane"/>
    <property type="evidence" value="ECO:0000318"/>
    <property type="project" value="GO_Central"/>
</dbReference>
<dbReference type="GO" id="GO:0016655">
    <property type="term" value="F:oxidoreductase activity, acting on NAD(P)H, quinone or similar compound as acceptor"/>
    <property type="evidence" value="ECO:0007669"/>
    <property type="project" value="UniProtKB-UniRule"/>
</dbReference>
<dbReference type="GO" id="GO:0006814">
    <property type="term" value="P:sodium ion transport"/>
    <property type="evidence" value="ECO:0007669"/>
    <property type="project" value="UniProtKB-UniRule"/>
</dbReference>
<dbReference type="HAMAP" id="MF_00428">
    <property type="entry name" value="NqrD"/>
    <property type="match status" value="1"/>
</dbReference>
<dbReference type="InterPro" id="IPR011292">
    <property type="entry name" value="NqrD"/>
</dbReference>
<dbReference type="InterPro" id="IPR003667">
    <property type="entry name" value="NqrDE/RnfAE"/>
</dbReference>
<dbReference type="NCBIfam" id="TIGR01939">
    <property type="entry name" value="nqrD"/>
    <property type="match status" value="1"/>
</dbReference>
<dbReference type="NCBIfam" id="NF006777">
    <property type="entry name" value="PRK09292.1"/>
    <property type="match status" value="1"/>
</dbReference>
<dbReference type="PANTHER" id="PTHR30586">
    <property type="entry name" value="ELECTRON TRANSPORT COMPLEX PROTEIN RNFE"/>
    <property type="match status" value="1"/>
</dbReference>
<dbReference type="PANTHER" id="PTHR30586:SF1">
    <property type="entry name" value="NA(+)-TRANSLOCATING NADH-QUINONE REDUCTASE SUBUNIT D"/>
    <property type="match status" value="1"/>
</dbReference>
<dbReference type="Pfam" id="PF02508">
    <property type="entry name" value="Rnf-Nqr"/>
    <property type="match status" value="1"/>
</dbReference>
<dbReference type="PIRSF" id="PIRSF006102">
    <property type="entry name" value="NQR_DE"/>
    <property type="match status" value="1"/>
</dbReference>
<proteinExistence type="inferred from homology"/>
<name>NQRD_CHLTR</name>
<organism>
    <name type="scientific">Chlamydia trachomatis serovar D (strain ATCC VR-885 / DSM 19411 / UW-3/Cx)</name>
    <dbReference type="NCBI Taxonomy" id="272561"/>
    <lineage>
        <taxon>Bacteria</taxon>
        <taxon>Pseudomonadati</taxon>
        <taxon>Chlamydiota</taxon>
        <taxon>Chlamydiia</taxon>
        <taxon>Chlamydiales</taxon>
        <taxon>Chlamydiaceae</taxon>
        <taxon>Chlamydia/Chlamydophila group</taxon>
        <taxon>Chlamydia</taxon>
    </lineage>
</organism>
<feature type="chain" id="PRO_0000214232" description="Na(+)-translocating NADH-quinone reductase subunit D">
    <location>
        <begin position="1"/>
        <end position="213"/>
    </location>
</feature>
<feature type="transmembrane region" description="Helical" evidence="1">
    <location>
        <begin position="22"/>
        <end position="42"/>
    </location>
</feature>
<feature type="transmembrane region" description="Helical" evidence="1">
    <location>
        <begin position="43"/>
        <end position="63"/>
    </location>
</feature>
<feature type="transmembrane region" description="Helical" evidence="1">
    <location>
        <begin position="77"/>
        <end position="97"/>
    </location>
</feature>
<feature type="transmembrane region" description="Helical" evidence="1">
    <location>
        <begin position="101"/>
        <end position="121"/>
    </location>
</feature>
<feature type="transmembrane region" description="Helical" evidence="1">
    <location>
        <begin position="131"/>
        <end position="151"/>
    </location>
</feature>
<feature type="transmembrane region" description="Helical" evidence="1">
    <location>
        <begin position="183"/>
        <end position="203"/>
    </location>
</feature>
<evidence type="ECO:0000255" key="1">
    <source>
        <dbReference type="HAMAP-Rule" id="MF_00428"/>
    </source>
</evidence>